<proteinExistence type="inferred from homology"/>
<dbReference type="EMBL" id="CP000316">
    <property type="protein sequence ID" value="ABE44949.1"/>
    <property type="molecule type" value="Genomic_DNA"/>
</dbReference>
<dbReference type="RefSeq" id="WP_011483947.1">
    <property type="nucleotide sequence ID" value="NC_007948.1"/>
</dbReference>
<dbReference type="SMR" id="Q128U3"/>
<dbReference type="STRING" id="296591.Bpro_3035"/>
<dbReference type="KEGG" id="pol:Bpro_3035"/>
<dbReference type="eggNOG" id="COG0238">
    <property type="taxonomic scope" value="Bacteria"/>
</dbReference>
<dbReference type="HOGENOM" id="CLU_148710_0_3_4"/>
<dbReference type="OrthoDB" id="9812008at2"/>
<dbReference type="Proteomes" id="UP000001983">
    <property type="component" value="Chromosome"/>
</dbReference>
<dbReference type="GO" id="GO:0022627">
    <property type="term" value="C:cytosolic small ribosomal subunit"/>
    <property type="evidence" value="ECO:0007669"/>
    <property type="project" value="TreeGrafter"/>
</dbReference>
<dbReference type="GO" id="GO:0070181">
    <property type="term" value="F:small ribosomal subunit rRNA binding"/>
    <property type="evidence" value="ECO:0007669"/>
    <property type="project" value="TreeGrafter"/>
</dbReference>
<dbReference type="GO" id="GO:0003735">
    <property type="term" value="F:structural constituent of ribosome"/>
    <property type="evidence" value="ECO:0007669"/>
    <property type="project" value="InterPro"/>
</dbReference>
<dbReference type="GO" id="GO:0006412">
    <property type="term" value="P:translation"/>
    <property type="evidence" value="ECO:0007669"/>
    <property type="project" value="UniProtKB-UniRule"/>
</dbReference>
<dbReference type="Gene3D" id="4.10.640.10">
    <property type="entry name" value="Ribosomal protein S18"/>
    <property type="match status" value="1"/>
</dbReference>
<dbReference type="HAMAP" id="MF_00270">
    <property type="entry name" value="Ribosomal_bS18"/>
    <property type="match status" value="1"/>
</dbReference>
<dbReference type="InterPro" id="IPR001648">
    <property type="entry name" value="Ribosomal_bS18"/>
</dbReference>
<dbReference type="InterPro" id="IPR036870">
    <property type="entry name" value="Ribosomal_bS18_sf"/>
</dbReference>
<dbReference type="NCBIfam" id="TIGR00165">
    <property type="entry name" value="S18"/>
    <property type="match status" value="1"/>
</dbReference>
<dbReference type="PANTHER" id="PTHR13479">
    <property type="entry name" value="30S RIBOSOMAL PROTEIN S18"/>
    <property type="match status" value="1"/>
</dbReference>
<dbReference type="PANTHER" id="PTHR13479:SF40">
    <property type="entry name" value="SMALL RIBOSOMAL SUBUNIT PROTEIN BS18M"/>
    <property type="match status" value="1"/>
</dbReference>
<dbReference type="Pfam" id="PF01084">
    <property type="entry name" value="Ribosomal_S18"/>
    <property type="match status" value="1"/>
</dbReference>
<dbReference type="PRINTS" id="PR00974">
    <property type="entry name" value="RIBOSOMALS18"/>
</dbReference>
<dbReference type="SUPFAM" id="SSF46911">
    <property type="entry name" value="Ribosomal protein S18"/>
    <property type="match status" value="1"/>
</dbReference>
<reference key="1">
    <citation type="journal article" date="2008" name="Appl. Environ. Microbiol.">
        <title>The genome of Polaromonas sp. strain JS666: insights into the evolution of a hydrocarbon- and xenobiotic-degrading bacterium, and features of relevance to biotechnology.</title>
        <authorList>
            <person name="Mattes T.E."/>
            <person name="Alexander A.K."/>
            <person name="Richardson P.M."/>
            <person name="Munk A.C."/>
            <person name="Han C.S."/>
            <person name="Stothard P."/>
            <person name="Coleman N.V."/>
        </authorList>
    </citation>
    <scope>NUCLEOTIDE SEQUENCE [LARGE SCALE GENOMIC DNA]</scope>
    <source>
        <strain>JS666 / ATCC BAA-500</strain>
    </source>
</reference>
<comment type="function">
    <text evidence="1">Binds as a heterodimer with protein bS6 to the central domain of the 16S rRNA, where it helps stabilize the platform of the 30S subunit.</text>
</comment>
<comment type="subunit">
    <text evidence="1">Part of the 30S ribosomal subunit. Forms a tight heterodimer with protein bS6.</text>
</comment>
<comment type="similarity">
    <text evidence="1">Belongs to the bacterial ribosomal protein bS18 family.</text>
</comment>
<accession>Q128U3</accession>
<protein>
    <recommendedName>
        <fullName evidence="1">Small ribosomal subunit protein bS18</fullName>
    </recommendedName>
    <alternativeName>
        <fullName evidence="2">30S ribosomal protein S18</fullName>
    </alternativeName>
</protein>
<organism>
    <name type="scientific">Polaromonas sp. (strain JS666 / ATCC BAA-500)</name>
    <dbReference type="NCBI Taxonomy" id="296591"/>
    <lineage>
        <taxon>Bacteria</taxon>
        <taxon>Pseudomonadati</taxon>
        <taxon>Pseudomonadota</taxon>
        <taxon>Betaproteobacteria</taxon>
        <taxon>Burkholderiales</taxon>
        <taxon>Comamonadaceae</taxon>
        <taxon>Polaromonas</taxon>
    </lineage>
</organism>
<name>RS18_POLSJ</name>
<evidence type="ECO:0000255" key="1">
    <source>
        <dbReference type="HAMAP-Rule" id="MF_00270"/>
    </source>
</evidence>
<evidence type="ECO:0000305" key="2"/>
<sequence>MAGPKRFNKDKRPKRNTQSLLFKRKRFCRFTAAGVEEIDYKDIDTLRDFVAENGKIIPARLTGTRAIFQRQINTAVKRARFLAMLPYSDQHRSL</sequence>
<keyword id="KW-1185">Reference proteome</keyword>
<keyword id="KW-0687">Ribonucleoprotein</keyword>
<keyword id="KW-0689">Ribosomal protein</keyword>
<keyword id="KW-0694">RNA-binding</keyword>
<keyword id="KW-0699">rRNA-binding</keyword>
<feature type="chain" id="PRO_1000003556" description="Small ribosomal subunit protein bS18">
    <location>
        <begin position="1"/>
        <end position="94"/>
    </location>
</feature>
<gene>
    <name evidence="1" type="primary">rpsR</name>
    <name type="ordered locus">Bpro_3035</name>
</gene>